<organism>
    <name type="scientific">Mycolicibacterium vanbaalenii (strain DSM 7251 / JCM 13017 / BCRC 16820 / KCTC 9966 / NRRL B-24157 / PYR-1)</name>
    <name type="common">Mycobacterium vanbaalenii</name>
    <dbReference type="NCBI Taxonomy" id="350058"/>
    <lineage>
        <taxon>Bacteria</taxon>
        <taxon>Bacillati</taxon>
        <taxon>Actinomycetota</taxon>
        <taxon>Actinomycetes</taxon>
        <taxon>Mycobacteriales</taxon>
        <taxon>Mycobacteriaceae</taxon>
        <taxon>Mycolicibacterium</taxon>
    </lineage>
</organism>
<reference key="1">
    <citation type="submission" date="2006-12" db="EMBL/GenBank/DDBJ databases">
        <title>Complete sequence of Mycobacterium vanbaalenii PYR-1.</title>
        <authorList>
            <consortium name="US DOE Joint Genome Institute"/>
            <person name="Copeland A."/>
            <person name="Lucas S."/>
            <person name="Lapidus A."/>
            <person name="Barry K."/>
            <person name="Detter J.C."/>
            <person name="Glavina del Rio T."/>
            <person name="Hammon N."/>
            <person name="Israni S."/>
            <person name="Dalin E."/>
            <person name="Tice H."/>
            <person name="Pitluck S."/>
            <person name="Singan V."/>
            <person name="Schmutz J."/>
            <person name="Larimer F."/>
            <person name="Land M."/>
            <person name="Hauser L."/>
            <person name="Kyrpides N."/>
            <person name="Anderson I.J."/>
            <person name="Miller C."/>
            <person name="Richardson P."/>
        </authorList>
    </citation>
    <scope>NUCLEOTIDE SEQUENCE [LARGE SCALE GENOMIC DNA]</scope>
    <source>
        <strain>DSM 7251 / JCM 13017 / BCRC 16820 / KCTC 9966 / NRRL B-24157 / PYR-1</strain>
    </source>
</reference>
<dbReference type="EMBL" id="CP000511">
    <property type="protein sequence ID" value="ABM14124.1"/>
    <property type="molecule type" value="Genomic_DNA"/>
</dbReference>
<dbReference type="RefSeq" id="WP_011780529.1">
    <property type="nucleotide sequence ID" value="NZ_JACKSD010000031.1"/>
</dbReference>
<dbReference type="SMR" id="A1TAC4"/>
<dbReference type="STRING" id="350058.Mvan_3327"/>
<dbReference type="KEGG" id="mva:Mvan_3327"/>
<dbReference type="eggNOG" id="COG0291">
    <property type="taxonomic scope" value="Bacteria"/>
</dbReference>
<dbReference type="HOGENOM" id="CLU_169643_4_2_11"/>
<dbReference type="Proteomes" id="UP000009159">
    <property type="component" value="Chromosome"/>
</dbReference>
<dbReference type="GO" id="GO:0022625">
    <property type="term" value="C:cytosolic large ribosomal subunit"/>
    <property type="evidence" value="ECO:0007669"/>
    <property type="project" value="TreeGrafter"/>
</dbReference>
<dbReference type="GO" id="GO:0003735">
    <property type="term" value="F:structural constituent of ribosome"/>
    <property type="evidence" value="ECO:0007669"/>
    <property type="project" value="InterPro"/>
</dbReference>
<dbReference type="GO" id="GO:0006412">
    <property type="term" value="P:translation"/>
    <property type="evidence" value="ECO:0007669"/>
    <property type="project" value="UniProtKB-UniRule"/>
</dbReference>
<dbReference type="FunFam" id="4.10.410.60:FF:000001">
    <property type="entry name" value="50S ribosomal protein L35"/>
    <property type="match status" value="1"/>
</dbReference>
<dbReference type="Gene3D" id="4.10.410.60">
    <property type="match status" value="1"/>
</dbReference>
<dbReference type="HAMAP" id="MF_00514">
    <property type="entry name" value="Ribosomal_bL35"/>
    <property type="match status" value="1"/>
</dbReference>
<dbReference type="InterPro" id="IPR001706">
    <property type="entry name" value="Ribosomal_bL35"/>
</dbReference>
<dbReference type="InterPro" id="IPR021137">
    <property type="entry name" value="Ribosomal_bL35-like"/>
</dbReference>
<dbReference type="InterPro" id="IPR018265">
    <property type="entry name" value="Ribosomal_bL35_CS"/>
</dbReference>
<dbReference type="InterPro" id="IPR037229">
    <property type="entry name" value="Ribosomal_bL35_sf"/>
</dbReference>
<dbReference type="NCBIfam" id="TIGR00001">
    <property type="entry name" value="rpmI_bact"/>
    <property type="match status" value="1"/>
</dbReference>
<dbReference type="PANTHER" id="PTHR33343">
    <property type="entry name" value="54S RIBOSOMAL PROTEIN BL35M"/>
    <property type="match status" value="1"/>
</dbReference>
<dbReference type="PANTHER" id="PTHR33343:SF1">
    <property type="entry name" value="LARGE RIBOSOMAL SUBUNIT PROTEIN BL35M"/>
    <property type="match status" value="1"/>
</dbReference>
<dbReference type="Pfam" id="PF01632">
    <property type="entry name" value="Ribosomal_L35p"/>
    <property type="match status" value="1"/>
</dbReference>
<dbReference type="PRINTS" id="PR00064">
    <property type="entry name" value="RIBOSOMALL35"/>
</dbReference>
<dbReference type="SUPFAM" id="SSF143034">
    <property type="entry name" value="L35p-like"/>
    <property type="match status" value="1"/>
</dbReference>
<dbReference type="PROSITE" id="PS00936">
    <property type="entry name" value="RIBOSOMAL_L35"/>
    <property type="match status" value="1"/>
</dbReference>
<name>RL35_MYCVP</name>
<proteinExistence type="inferred from homology"/>
<protein>
    <recommendedName>
        <fullName evidence="1">Large ribosomal subunit protein bL35</fullName>
    </recommendedName>
    <alternativeName>
        <fullName evidence="3">50S ribosomal protein L35</fullName>
    </alternativeName>
</protein>
<feature type="chain" id="PRO_1000050725" description="Large ribosomal subunit protein bL35">
    <location>
        <begin position="1"/>
        <end position="64"/>
    </location>
</feature>
<feature type="region of interest" description="Disordered" evidence="2">
    <location>
        <begin position="1"/>
        <end position="45"/>
    </location>
</feature>
<feature type="compositionally biased region" description="Basic residues" evidence="2">
    <location>
        <begin position="1"/>
        <end position="15"/>
    </location>
</feature>
<feature type="compositionally biased region" description="Basic residues" evidence="2">
    <location>
        <begin position="23"/>
        <end position="42"/>
    </location>
</feature>
<evidence type="ECO:0000255" key="1">
    <source>
        <dbReference type="HAMAP-Rule" id="MF_00514"/>
    </source>
</evidence>
<evidence type="ECO:0000256" key="2">
    <source>
        <dbReference type="SAM" id="MobiDB-lite"/>
    </source>
</evidence>
<evidence type="ECO:0000305" key="3"/>
<comment type="similarity">
    <text evidence="1">Belongs to the bacterial ribosomal protein bL35 family.</text>
</comment>
<sequence>MPKAKTHSGASKRFRTTGSGKVVRQKANRRHLLEHKPTKRTRRLDGRTVVAANDVKRVKKLLNG</sequence>
<accession>A1TAC4</accession>
<gene>
    <name evidence="1" type="primary">rpmI</name>
    <name type="ordered locus">Mvan_3327</name>
</gene>
<keyword id="KW-0687">Ribonucleoprotein</keyword>
<keyword id="KW-0689">Ribosomal protein</keyword>